<accession>P59186</accession>
<keyword id="KW-1185">Reference proteome</keyword>
<keyword id="KW-0687">Ribonucleoprotein</keyword>
<keyword id="KW-0689">Ribosomal protein</keyword>
<keyword id="KW-0694">RNA-binding</keyword>
<keyword id="KW-0699">rRNA-binding</keyword>
<comment type="function">
    <text evidence="1">Binds the lower part of the 30S subunit head. Binds mRNA in the 70S ribosome, positioning it for translation.</text>
</comment>
<comment type="subunit">
    <text evidence="1">Part of the 30S ribosomal subunit. Forms a tight complex with proteins S10 and S14.</text>
</comment>
<comment type="similarity">
    <text evidence="1">Belongs to the universal ribosomal protein uS3 family.</text>
</comment>
<comment type="sequence caution" evidence="2">
    <conflict type="erroneous initiation">
        <sequence resource="EMBL-CDS" id="AAN59624"/>
    </conflict>
</comment>
<name>RS3_STRMU</name>
<organism>
    <name type="scientific">Streptococcus mutans serotype c (strain ATCC 700610 / UA159)</name>
    <dbReference type="NCBI Taxonomy" id="210007"/>
    <lineage>
        <taxon>Bacteria</taxon>
        <taxon>Bacillati</taxon>
        <taxon>Bacillota</taxon>
        <taxon>Bacilli</taxon>
        <taxon>Lactobacillales</taxon>
        <taxon>Streptococcaceae</taxon>
        <taxon>Streptococcus</taxon>
    </lineage>
</organism>
<gene>
    <name evidence="1" type="primary">rpsC</name>
    <name type="synonym">rs3</name>
    <name type="ordered locus">SMU_2021</name>
</gene>
<proteinExistence type="inferred from homology"/>
<dbReference type="EMBL" id="AE014133">
    <property type="protein sequence ID" value="AAN59624.1"/>
    <property type="status" value="ALT_INIT"/>
    <property type="molecule type" value="Genomic_DNA"/>
</dbReference>
<dbReference type="RefSeq" id="NP_722318.3">
    <property type="nucleotide sequence ID" value="NC_004350.2"/>
</dbReference>
<dbReference type="RefSeq" id="WP_002262334.1">
    <property type="nucleotide sequence ID" value="NC_004350.2"/>
</dbReference>
<dbReference type="SMR" id="P59186"/>
<dbReference type="STRING" id="210007.SMU_2021"/>
<dbReference type="GeneID" id="93860223"/>
<dbReference type="KEGG" id="smu:SMU_2021"/>
<dbReference type="PATRIC" id="fig|210007.7.peg.1801"/>
<dbReference type="eggNOG" id="COG0092">
    <property type="taxonomic scope" value="Bacteria"/>
</dbReference>
<dbReference type="HOGENOM" id="CLU_058591_0_2_9"/>
<dbReference type="OrthoDB" id="9806396at2"/>
<dbReference type="PhylomeDB" id="P59186"/>
<dbReference type="Proteomes" id="UP000002512">
    <property type="component" value="Chromosome"/>
</dbReference>
<dbReference type="GO" id="GO:0022627">
    <property type="term" value="C:cytosolic small ribosomal subunit"/>
    <property type="evidence" value="ECO:0007669"/>
    <property type="project" value="TreeGrafter"/>
</dbReference>
<dbReference type="GO" id="GO:0003729">
    <property type="term" value="F:mRNA binding"/>
    <property type="evidence" value="ECO:0007669"/>
    <property type="project" value="UniProtKB-UniRule"/>
</dbReference>
<dbReference type="GO" id="GO:0019843">
    <property type="term" value="F:rRNA binding"/>
    <property type="evidence" value="ECO:0007669"/>
    <property type="project" value="UniProtKB-UniRule"/>
</dbReference>
<dbReference type="GO" id="GO:0003735">
    <property type="term" value="F:structural constituent of ribosome"/>
    <property type="evidence" value="ECO:0007669"/>
    <property type="project" value="InterPro"/>
</dbReference>
<dbReference type="GO" id="GO:0006412">
    <property type="term" value="P:translation"/>
    <property type="evidence" value="ECO:0007669"/>
    <property type="project" value="UniProtKB-UniRule"/>
</dbReference>
<dbReference type="CDD" id="cd02412">
    <property type="entry name" value="KH-II_30S_S3"/>
    <property type="match status" value="1"/>
</dbReference>
<dbReference type="FunFam" id="3.30.1140.32:FF:000001">
    <property type="entry name" value="30S ribosomal protein S3"/>
    <property type="match status" value="1"/>
</dbReference>
<dbReference type="FunFam" id="3.30.300.20:FF:000001">
    <property type="entry name" value="30S ribosomal protein S3"/>
    <property type="match status" value="1"/>
</dbReference>
<dbReference type="Gene3D" id="3.30.300.20">
    <property type="match status" value="1"/>
</dbReference>
<dbReference type="Gene3D" id="3.30.1140.32">
    <property type="entry name" value="Ribosomal protein S3, C-terminal domain"/>
    <property type="match status" value="1"/>
</dbReference>
<dbReference type="HAMAP" id="MF_01309_B">
    <property type="entry name" value="Ribosomal_uS3_B"/>
    <property type="match status" value="1"/>
</dbReference>
<dbReference type="InterPro" id="IPR004087">
    <property type="entry name" value="KH_dom"/>
</dbReference>
<dbReference type="InterPro" id="IPR015946">
    <property type="entry name" value="KH_dom-like_a/b"/>
</dbReference>
<dbReference type="InterPro" id="IPR004044">
    <property type="entry name" value="KH_dom_type_2"/>
</dbReference>
<dbReference type="InterPro" id="IPR009019">
    <property type="entry name" value="KH_sf_prok-type"/>
</dbReference>
<dbReference type="InterPro" id="IPR036419">
    <property type="entry name" value="Ribosomal_S3_C_sf"/>
</dbReference>
<dbReference type="InterPro" id="IPR005704">
    <property type="entry name" value="Ribosomal_uS3_bac-typ"/>
</dbReference>
<dbReference type="InterPro" id="IPR001351">
    <property type="entry name" value="Ribosomal_uS3_C"/>
</dbReference>
<dbReference type="InterPro" id="IPR018280">
    <property type="entry name" value="Ribosomal_uS3_CS"/>
</dbReference>
<dbReference type="NCBIfam" id="TIGR01009">
    <property type="entry name" value="rpsC_bact"/>
    <property type="match status" value="1"/>
</dbReference>
<dbReference type="PANTHER" id="PTHR11760">
    <property type="entry name" value="30S/40S RIBOSOMAL PROTEIN S3"/>
    <property type="match status" value="1"/>
</dbReference>
<dbReference type="PANTHER" id="PTHR11760:SF19">
    <property type="entry name" value="SMALL RIBOSOMAL SUBUNIT PROTEIN US3C"/>
    <property type="match status" value="1"/>
</dbReference>
<dbReference type="Pfam" id="PF07650">
    <property type="entry name" value="KH_2"/>
    <property type="match status" value="1"/>
</dbReference>
<dbReference type="Pfam" id="PF00189">
    <property type="entry name" value="Ribosomal_S3_C"/>
    <property type="match status" value="1"/>
</dbReference>
<dbReference type="SMART" id="SM00322">
    <property type="entry name" value="KH"/>
    <property type="match status" value="1"/>
</dbReference>
<dbReference type="SUPFAM" id="SSF54814">
    <property type="entry name" value="Prokaryotic type KH domain (KH-domain type II)"/>
    <property type="match status" value="1"/>
</dbReference>
<dbReference type="SUPFAM" id="SSF54821">
    <property type="entry name" value="Ribosomal protein S3 C-terminal domain"/>
    <property type="match status" value="1"/>
</dbReference>
<dbReference type="PROSITE" id="PS50823">
    <property type="entry name" value="KH_TYPE_2"/>
    <property type="match status" value="1"/>
</dbReference>
<dbReference type="PROSITE" id="PS00548">
    <property type="entry name" value="RIBOSOMAL_S3"/>
    <property type="match status" value="1"/>
</dbReference>
<protein>
    <recommendedName>
        <fullName evidence="1">Small ribosomal subunit protein uS3</fullName>
    </recommendedName>
    <alternativeName>
        <fullName evidence="2">30S ribosomal protein S3</fullName>
    </alternativeName>
</protein>
<evidence type="ECO:0000255" key="1">
    <source>
        <dbReference type="HAMAP-Rule" id="MF_01309"/>
    </source>
</evidence>
<evidence type="ECO:0000305" key="2"/>
<feature type="chain" id="PRO_0000130207" description="Small ribosomal subunit protein uS3">
    <location>
        <begin position="1"/>
        <end position="217"/>
    </location>
</feature>
<feature type="domain" description="KH type-2" evidence="1">
    <location>
        <begin position="29"/>
        <end position="97"/>
    </location>
</feature>
<sequence length="217" mass="24122">MGQKVHPIGMRVGIIRDWDAKWYAEKEYADYLHEDLAIRKFIQKELADAAVSTIEIERAVNKVNVSLHTAKPGMVIGKGGANVDALRAQLNKLTGKQVHINIVEIKSPDLDAHLVGENIARQLEQRVAFRRAQKQAIQRTMRAGAKGIKTQVSGRLNGADIARSEGYSEGTVPLHTLRADIDYAWEEADTTYGKLGVKVWIYRGEILPARKNTKGGK</sequence>
<reference key="1">
    <citation type="journal article" date="2002" name="Proc. Natl. Acad. Sci. U.S.A.">
        <title>Genome sequence of Streptococcus mutans UA159, a cariogenic dental pathogen.</title>
        <authorList>
            <person name="Ajdic D.J."/>
            <person name="McShan W.M."/>
            <person name="McLaughlin R.E."/>
            <person name="Savic G."/>
            <person name="Chang J."/>
            <person name="Carson M.B."/>
            <person name="Primeaux C."/>
            <person name="Tian R."/>
            <person name="Kenton S."/>
            <person name="Jia H.G."/>
            <person name="Lin S.P."/>
            <person name="Qian Y."/>
            <person name="Li S."/>
            <person name="Zhu H."/>
            <person name="Najar F.Z."/>
            <person name="Lai H."/>
            <person name="White J."/>
            <person name="Roe B.A."/>
            <person name="Ferretti J.J."/>
        </authorList>
    </citation>
    <scope>NUCLEOTIDE SEQUENCE [LARGE SCALE GENOMIC DNA]</scope>
    <source>
        <strain>ATCC 700610 / UA159</strain>
    </source>
</reference>